<dbReference type="EMBL" id="AF059616">
    <property type="protein sequence ID" value="AAD55587.1"/>
    <property type="molecule type" value="mRNA"/>
</dbReference>
<dbReference type="SMR" id="Q9SQI9"/>
<dbReference type="Allergome" id="3097">
    <property type="allergen name" value="Ara h 5.0101"/>
</dbReference>
<dbReference type="Allergome" id="54">
    <property type="allergen name" value="Ara h 5"/>
</dbReference>
<dbReference type="GO" id="GO:0005938">
    <property type="term" value="C:cell cortex"/>
    <property type="evidence" value="ECO:0007669"/>
    <property type="project" value="TreeGrafter"/>
</dbReference>
<dbReference type="GO" id="GO:0005856">
    <property type="term" value="C:cytoskeleton"/>
    <property type="evidence" value="ECO:0007669"/>
    <property type="project" value="UniProtKB-SubCell"/>
</dbReference>
<dbReference type="GO" id="GO:0003785">
    <property type="term" value="F:actin monomer binding"/>
    <property type="evidence" value="ECO:0007669"/>
    <property type="project" value="TreeGrafter"/>
</dbReference>
<dbReference type="CDD" id="cd00148">
    <property type="entry name" value="PROF"/>
    <property type="match status" value="1"/>
</dbReference>
<dbReference type="FunFam" id="3.30.450.30:FF:000001">
    <property type="entry name" value="Profilin"/>
    <property type="match status" value="1"/>
</dbReference>
<dbReference type="Gene3D" id="3.30.450.30">
    <property type="entry name" value="Dynein light chain 2a, cytoplasmic"/>
    <property type="match status" value="1"/>
</dbReference>
<dbReference type="InterPro" id="IPR048278">
    <property type="entry name" value="PFN"/>
</dbReference>
<dbReference type="InterPro" id="IPR005455">
    <property type="entry name" value="PFN_euk"/>
</dbReference>
<dbReference type="InterPro" id="IPR036140">
    <property type="entry name" value="PFN_sf"/>
</dbReference>
<dbReference type="InterPro" id="IPR027310">
    <property type="entry name" value="Profilin_CS"/>
</dbReference>
<dbReference type="PANTHER" id="PTHR11604">
    <property type="entry name" value="PROFILIN"/>
    <property type="match status" value="1"/>
</dbReference>
<dbReference type="PANTHER" id="PTHR11604:SF49">
    <property type="entry name" value="PROFILIN-2"/>
    <property type="match status" value="1"/>
</dbReference>
<dbReference type="Pfam" id="PF00235">
    <property type="entry name" value="Profilin"/>
    <property type="match status" value="1"/>
</dbReference>
<dbReference type="PRINTS" id="PR00392">
    <property type="entry name" value="PROFILIN"/>
</dbReference>
<dbReference type="PRINTS" id="PR01640">
    <property type="entry name" value="PROFILINPLNT"/>
</dbReference>
<dbReference type="SMART" id="SM00392">
    <property type="entry name" value="PROF"/>
    <property type="match status" value="1"/>
</dbReference>
<dbReference type="SUPFAM" id="SSF55770">
    <property type="entry name" value="Profilin (actin-binding protein)"/>
    <property type="match status" value="1"/>
</dbReference>
<dbReference type="PROSITE" id="PS00414">
    <property type="entry name" value="PROFILIN"/>
    <property type="match status" value="1"/>
</dbReference>
<name>PROF_ARAHY</name>
<feature type="initiator methionine" description="Removed" evidence="1">
    <location>
        <position position="1"/>
    </location>
</feature>
<feature type="chain" id="PRO_0000199614" description="Profilin">
    <location>
        <begin position="2"/>
        <end position="131"/>
    </location>
</feature>
<protein>
    <recommendedName>
        <fullName>Profilin</fullName>
    </recommendedName>
    <allergenName>Ara h 5</allergenName>
</protein>
<accession>Q9SQI9</accession>
<sequence length="131" mass="14051">MSWQTYVDNHLLCEIEGDHLSSAAILGQDGGVWAQSSHFPQFKPEEITAIMNDFAEPGSLAPTGLYLGGTKYMVIQGEPGAIIPGKKGPGGVTIEKTNQALIIGIYDKPMTPGQCNMIVERLGDYLIDTGL</sequence>
<keyword id="KW-0009">Actin-binding</keyword>
<keyword id="KW-0020">Allergen</keyword>
<keyword id="KW-0963">Cytoplasm</keyword>
<keyword id="KW-0206">Cytoskeleton</keyword>
<evidence type="ECO:0000250" key="1"/>
<evidence type="ECO:0000269" key="2">
    <source>
    </source>
</evidence>
<evidence type="ECO:0000305" key="3"/>
<comment type="function">
    <text evidence="1">Binds to actin and affects the structure of the cytoskeleton. At high concentrations, profilin prevents the polymerization of actin, whereas it enhances it at low concentrations. By binding to PIP2, it inhibits the formation of IP3 and DG (By similarity).</text>
</comment>
<comment type="subunit">
    <text>Occurs in many kinds of cells as a complex with monomeric actin in a 1:1 ratio.</text>
</comment>
<comment type="subcellular location">
    <subcellularLocation>
        <location evidence="1">Cytoplasm</location>
        <location evidence="1">Cytoskeleton</location>
    </subcellularLocation>
</comment>
<comment type="allergen">
    <text evidence="2">Causes an allergic reaction in human.</text>
</comment>
<comment type="similarity">
    <text evidence="3">Belongs to the profilin family.</text>
</comment>
<organism>
    <name type="scientific">Arachis hypogaea</name>
    <name type="common">Peanut</name>
    <dbReference type="NCBI Taxonomy" id="3818"/>
    <lineage>
        <taxon>Eukaryota</taxon>
        <taxon>Viridiplantae</taxon>
        <taxon>Streptophyta</taxon>
        <taxon>Embryophyta</taxon>
        <taxon>Tracheophyta</taxon>
        <taxon>Spermatophyta</taxon>
        <taxon>Magnoliopsida</taxon>
        <taxon>eudicotyledons</taxon>
        <taxon>Gunneridae</taxon>
        <taxon>Pentapetalae</taxon>
        <taxon>rosids</taxon>
        <taxon>fabids</taxon>
        <taxon>Fabales</taxon>
        <taxon>Fabaceae</taxon>
        <taxon>Papilionoideae</taxon>
        <taxon>50 kb inversion clade</taxon>
        <taxon>dalbergioids sensu lato</taxon>
        <taxon>Dalbergieae</taxon>
        <taxon>Pterocarpus clade</taxon>
        <taxon>Arachis</taxon>
    </lineage>
</organism>
<reference key="1">
    <citation type="journal article" date="1999" name="Int. Arch. Allergy Immunol.">
        <title>Selective cloning of peanut allergens, including profilin and 2S albumins, by phage display technology.</title>
        <authorList>
            <person name="Kleber-Janke T."/>
            <person name="Crameri R."/>
            <person name="Appenzeller U."/>
            <person name="Schlaak M."/>
            <person name="Becker W.-M."/>
        </authorList>
    </citation>
    <scope>NUCLEOTIDE SEQUENCE [MRNA]</scope>
    <scope>ALLERGEN</scope>
    <source>
        <strain>cv. Virginia</strain>
        <tissue>Seed</tissue>
    </source>
</reference>
<proteinExistence type="evidence at protein level"/>